<gene>
    <name evidence="1" type="primary">rpsN</name>
    <name type="ordered locus">Mpe_A3430</name>
</gene>
<dbReference type="EMBL" id="CP000555">
    <property type="protein sequence ID" value="ABM96383.1"/>
    <property type="molecule type" value="Genomic_DNA"/>
</dbReference>
<dbReference type="RefSeq" id="WP_011831004.1">
    <property type="nucleotide sequence ID" value="NC_008825.1"/>
</dbReference>
<dbReference type="SMR" id="A2SLE4"/>
<dbReference type="STRING" id="420662.Mpe_A3430"/>
<dbReference type="KEGG" id="mpt:Mpe_A3430"/>
<dbReference type="eggNOG" id="COG0199">
    <property type="taxonomic scope" value="Bacteria"/>
</dbReference>
<dbReference type="HOGENOM" id="CLU_139869_0_1_4"/>
<dbReference type="Proteomes" id="UP000000366">
    <property type="component" value="Chromosome"/>
</dbReference>
<dbReference type="GO" id="GO:0005737">
    <property type="term" value="C:cytoplasm"/>
    <property type="evidence" value="ECO:0007669"/>
    <property type="project" value="UniProtKB-ARBA"/>
</dbReference>
<dbReference type="GO" id="GO:0015935">
    <property type="term" value="C:small ribosomal subunit"/>
    <property type="evidence" value="ECO:0007669"/>
    <property type="project" value="TreeGrafter"/>
</dbReference>
<dbReference type="GO" id="GO:0019843">
    <property type="term" value="F:rRNA binding"/>
    <property type="evidence" value="ECO:0007669"/>
    <property type="project" value="UniProtKB-UniRule"/>
</dbReference>
<dbReference type="GO" id="GO:0003735">
    <property type="term" value="F:structural constituent of ribosome"/>
    <property type="evidence" value="ECO:0007669"/>
    <property type="project" value="InterPro"/>
</dbReference>
<dbReference type="GO" id="GO:0006412">
    <property type="term" value="P:translation"/>
    <property type="evidence" value="ECO:0007669"/>
    <property type="project" value="UniProtKB-UniRule"/>
</dbReference>
<dbReference type="FunFam" id="1.10.287.1480:FF:000001">
    <property type="entry name" value="30S ribosomal protein S14"/>
    <property type="match status" value="1"/>
</dbReference>
<dbReference type="Gene3D" id="1.10.287.1480">
    <property type="match status" value="1"/>
</dbReference>
<dbReference type="HAMAP" id="MF_00537">
    <property type="entry name" value="Ribosomal_uS14_1"/>
    <property type="match status" value="1"/>
</dbReference>
<dbReference type="InterPro" id="IPR001209">
    <property type="entry name" value="Ribosomal_uS14"/>
</dbReference>
<dbReference type="InterPro" id="IPR023036">
    <property type="entry name" value="Ribosomal_uS14_bac/plastid"/>
</dbReference>
<dbReference type="NCBIfam" id="NF006477">
    <property type="entry name" value="PRK08881.1"/>
    <property type="match status" value="1"/>
</dbReference>
<dbReference type="PANTHER" id="PTHR19836">
    <property type="entry name" value="30S RIBOSOMAL PROTEIN S14"/>
    <property type="match status" value="1"/>
</dbReference>
<dbReference type="PANTHER" id="PTHR19836:SF19">
    <property type="entry name" value="SMALL RIBOSOMAL SUBUNIT PROTEIN US14M"/>
    <property type="match status" value="1"/>
</dbReference>
<dbReference type="Pfam" id="PF00253">
    <property type="entry name" value="Ribosomal_S14"/>
    <property type="match status" value="1"/>
</dbReference>
<dbReference type="SUPFAM" id="SSF57716">
    <property type="entry name" value="Glucocorticoid receptor-like (DNA-binding domain)"/>
    <property type="match status" value="1"/>
</dbReference>
<organism>
    <name type="scientific">Methylibium petroleiphilum (strain ATCC BAA-1232 / LMG 22953 / PM1)</name>
    <dbReference type="NCBI Taxonomy" id="420662"/>
    <lineage>
        <taxon>Bacteria</taxon>
        <taxon>Pseudomonadati</taxon>
        <taxon>Pseudomonadota</taxon>
        <taxon>Betaproteobacteria</taxon>
        <taxon>Burkholderiales</taxon>
        <taxon>Sphaerotilaceae</taxon>
        <taxon>Methylibium</taxon>
    </lineage>
</organism>
<keyword id="KW-1185">Reference proteome</keyword>
<keyword id="KW-0687">Ribonucleoprotein</keyword>
<keyword id="KW-0689">Ribosomal protein</keyword>
<keyword id="KW-0694">RNA-binding</keyword>
<keyword id="KW-0699">rRNA-binding</keyword>
<feature type="chain" id="PRO_1000128448" description="Small ribosomal subunit protein uS14">
    <location>
        <begin position="1"/>
        <end position="101"/>
    </location>
</feature>
<comment type="function">
    <text evidence="1">Binds 16S rRNA, required for the assembly of 30S particles and may also be responsible for determining the conformation of the 16S rRNA at the A site.</text>
</comment>
<comment type="subunit">
    <text evidence="1">Part of the 30S ribosomal subunit. Contacts proteins S3 and S10.</text>
</comment>
<comment type="similarity">
    <text evidence="1">Belongs to the universal ribosomal protein uS14 family.</text>
</comment>
<accession>A2SLE4</accession>
<protein>
    <recommendedName>
        <fullName evidence="1">Small ribosomal subunit protein uS14</fullName>
    </recommendedName>
    <alternativeName>
        <fullName evidence="2">30S ribosomal protein S14</fullName>
    </alternativeName>
</protein>
<sequence length="101" mass="11620">MAKLSIKQRELKREQLVAKFAKKYAELKAIINDAGKSDEERYTARLALQKLPRNAYPSRLRNRCELTGRPRGTFRTFGLARNKIRELAFKGDIPGVVKASW</sequence>
<reference key="1">
    <citation type="journal article" date="2007" name="J. Bacteriol.">
        <title>Whole-genome analysis of the methyl tert-butyl ether-degrading beta-proteobacterium Methylibium petroleiphilum PM1.</title>
        <authorList>
            <person name="Kane S.R."/>
            <person name="Chakicherla A.Y."/>
            <person name="Chain P.S.G."/>
            <person name="Schmidt R."/>
            <person name="Shin M.W."/>
            <person name="Legler T.C."/>
            <person name="Scow K.M."/>
            <person name="Larimer F.W."/>
            <person name="Lucas S.M."/>
            <person name="Richardson P.M."/>
            <person name="Hristova K.R."/>
        </authorList>
    </citation>
    <scope>NUCLEOTIDE SEQUENCE [LARGE SCALE GENOMIC DNA]</scope>
    <source>
        <strain>ATCC BAA-1232 / LMG 22953 / PM1</strain>
    </source>
</reference>
<evidence type="ECO:0000255" key="1">
    <source>
        <dbReference type="HAMAP-Rule" id="MF_00537"/>
    </source>
</evidence>
<evidence type="ECO:0000305" key="2"/>
<name>RS14_METPP</name>
<proteinExistence type="inferred from homology"/>